<dbReference type="EMBL" id="AC074259">
    <property type="protein sequence ID" value="AAX80847.1"/>
    <property type="molecule type" value="Genomic_DNA"/>
</dbReference>
<dbReference type="EMBL" id="CP000069">
    <property type="protein sequence ID" value="AAZ11776.1"/>
    <property type="molecule type" value="Genomic_DNA"/>
</dbReference>
<dbReference type="RefSeq" id="XP_845335.1">
    <property type="nucleotide sequence ID" value="XM_840242.1"/>
</dbReference>
<dbReference type="SMR" id="Q584U2"/>
<dbReference type="STRING" id="185431.Q584U2"/>
<dbReference type="PaxDb" id="5691-AAZ11776"/>
<dbReference type="GeneID" id="3657848"/>
<dbReference type="KEGG" id="tbr:Tb927.6.2140"/>
<dbReference type="VEuPathDB" id="TriTrypDB:Tb927.6.2140"/>
<dbReference type="eggNOG" id="ENOG502RZ8Q">
    <property type="taxonomic scope" value="Eukaryota"/>
</dbReference>
<dbReference type="InParanoid" id="Q584U2"/>
<dbReference type="OMA" id="GSRFPFY"/>
<dbReference type="OrthoDB" id="270211at2759"/>
<dbReference type="Proteomes" id="UP000008524">
    <property type="component" value="Chromosome 6"/>
</dbReference>
<dbReference type="GO" id="GO:0005737">
    <property type="term" value="C:cytoplasm"/>
    <property type="evidence" value="ECO:0000318"/>
    <property type="project" value="GO_Central"/>
</dbReference>
<dbReference type="GO" id="GO:0031019">
    <property type="term" value="C:mitochondrial mRNA editing complex"/>
    <property type="evidence" value="ECO:0000314"/>
    <property type="project" value="UniProtKB"/>
</dbReference>
<dbReference type="GO" id="GO:0005739">
    <property type="term" value="C:mitochondrion"/>
    <property type="evidence" value="ECO:0000314"/>
    <property type="project" value="UniProtKB"/>
</dbReference>
<dbReference type="GO" id="GO:0008684">
    <property type="term" value="F:2-oxopent-4-enoate hydratase activity"/>
    <property type="evidence" value="ECO:0000318"/>
    <property type="project" value="GO_Central"/>
</dbReference>
<dbReference type="GO" id="GO:0000963">
    <property type="term" value="P:mitochondrial RNA processing"/>
    <property type="evidence" value="ECO:0000305"/>
    <property type="project" value="GeneDB"/>
</dbReference>
<dbReference type="GO" id="GO:0006397">
    <property type="term" value="P:mRNA processing"/>
    <property type="evidence" value="ECO:0007669"/>
    <property type="project" value="UniProtKB-KW"/>
</dbReference>
<dbReference type="Gene3D" id="3.90.850.10">
    <property type="entry name" value="Fumarylacetoacetase-like, C-terminal domain"/>
    <property type="match status" value="1"/>
</dbReference>
<dbReference type="InterPro" id="IPR036663">
    <property type="entry name" value="Fumarylacetoacetase_C_sf"/>
</dbReference>
<dbReference type="InterPro" id="IPR050772">
    <property type="entry name" value="Hydratase-Decarb/MhpD_sf"/>
</dbReference>
<dbReference type="PANTHER" id="PTHR30143:SF0">
    <property type="entry name" value="2-KETO-4-PENTENOATE HYDRATASE"/>
    <property type="match status" value="1"/>
</dbReference>
<dbReference type="PANTHER" id="PTHR30143">
    <property type="entry name" value="ACID HYDRATASE"/>
    <property type="match status" value="1"/>
</dbReference>
<dbReference type="SUPFAM" id="SSF56529">
    <property type="entry name" value="FAH"/>
    <property type="match status" value="1"/>
</dbReference>
<gene>
    <name evidence="3" type="primary">H2F2</name>
    <name evidence="5" type="ORF">Tb927.6.2140</name>
</gene>
<accession>Q584U2</accession>
<accession>D6XHU7</accession>
<keyword id="KW-0496">Mitochondrion</keyword>
<keyword id="KW-0507">mRNA processing</keyword>
<keyword id="KW-1185">Reference proteome</keyword>
<keyword id="KW-0809">Transit peptide</keyword>
<organism evidence="7">
    <name type="scientific">Trypanosoma brucei brucei (strain 927/4 GUTat10.1)</name>
    <dbReference type="NCBI Taxonomy" id="185431"/>
    <lineage>
        <taxon>Eukaryota</taxon>
        <taxon>Discoba</taxon>
        <taxon>Euglenozoa</taxon>
        <taxon>Kinetoplastea</taxon>
        <taxon>Metakinetoplastina</taxon>
        <taxon>Trypanosomatida</taxon>
        <taxon>Trypanosomatidae</taxon>
        <taxon>Trypanosoma</taxon>
    </lineage>
</organism>
<proteinExistence type="evidence at protein level"/>
<name>H2F2_TRYB2</name>
<sequence length="267" mass="28771">MFRWSWCRLIISKVSAESYVDYLQNSDRELPALSEIFPRHGTGTGELVKFHSLLCEAMKDHNFNYVGIKVVPPTSPPLQCLRATEPVCVPIFSNSFQGSVFSAKQHRIQFVEPLFVIRLGRDPPTQLTANTVPAVCDAFFPGVEFVGSRYPFYPPHTTGFAADLGGCVAVHLGEAVSLGSASLESLGDTNFVVTRREEPIQVGAGKNCLGGPGAAVALAVSYAASMGWPLREKHYIFCSGVGSRSPALAGEYKVNYGAYGSVSASLT</sequence>
<protein>
    <recommendedName>
        <fullName evidence="3">REH2-associated factor 2</fullName>
    </recommendedName>
</protein>
<comment type="function">
    <text evidence="2">May play a role in mitochondrial mRNA editing by facilitating the association of the gRNA-binding (GRBC) complex with the RNA editing core (RECC) complex (PubMed:26769962). However, appears to be dispensable for mRNA editing per se (PubMed:26769962).</text>
</comment>
<comment type="subunit">
    <text evidence="2">Component of the REH2-associated complex (REH2C) composed of helicase REH2, associated factors H2F1 and H2F2, and mRNAs at various editing stages; the formation of the complex is RNA-independent (PubMed:26769962). Interacts with various editing complexes including the RNA editing core (RECC) complex, the gRNA-binding (GRBC) complex (also known as the MRB1 complex) and the RNA editing mediator (REMC) complex (PubMed:26769962).</text>
</comment>
<comment type="subcellular location">
    <subcellularLocation>
        <location evidence="2">Mitochondrion</location>
    </subcellularLocation>
</comment>
<comment type="developmental stage">
    <text evidence="2">Expressed at the procyclic stage (at protein level).</text>
</comment>
<comment type="disruption phenotype">
    <text evidence="2">RNAi-mediated knockdown at the procyclic stage does not cause defects in RHE2 interaction with H2F1 or their association with components of the RECC and GRBC editing complexes; however, causes a slight decrease in the association of the GRBC complex with the RECC complex (PubMed:26769962). No defect in mitochondrial mRNA editing (PubMed:26769962).</text>
</comment>
<evidence type="ECO:0000255" key="1"/>
<evidence type="ECO:0000269" key="2">
    <source>
    </source>
</evidence>
<evidence type="ECO:0000303" key="3">
    <source>
    </source>
</evidence>
<evidence type="ECO:0000305" key="4"/>
<evidence type="ECO:0000312" key="5">
    <source>
        <dbReference type="EMBL" id="AAX80847.1"/>
    </source>
</evidence>
<evidence type="ECO:0000312" key="6">
    <source>
        <dbReference type="EMBL" id="AAZ11776.1"/>
    </source>
</evidence>
<evidence type="ECO:0000312" key="7">
    <source>
        <dbReference type="Proteomes" id="UP000008524"/>
    </source>
</evidence>
<reference evidence="5" key="1">
    <citation type="submission" date="2000-07" db="EMBL/GenBank/DDBJ databases">
        <authorList>
            <person name="Ghedin E."/>
            <person name="Blandin G."/>
            <person name="Bartholomeu D."/>
            <person name="Caler E."/>
            <person name="Haas B."/>
            <person name="Hannick L."/>
            <person name="Shallom J."/>
            <person name="Hou L."/>
            <person name="Djikeng A."/>
            <person name="Feldblyum T."/>
            <person name="Hostetler J."/>
            <person name="Johnson J."/>
            <person name="Jones K."/>
            <person name="Koo H.L."/>
            <person name="Larkin C."/>
            <person name="Pai G."/>
            <person name="Peterson J."/>
            <person name="Khalak H.G."/>
            <person name="Salzberg S."/>
            <person name="Simpson A.J."/>
            <person name="Tallon L."/>
            <person name="Van Aken S."/>
            <person name="Wanless D."/>
            <person name="White O."/>
            <person name="Wortman J."/>
            <person name="Fraser C.M."/>
            <person name="El-Sayed N.M.A."/>
        </authorList>
    </citation>
    <scope>NUCLEOTIDE SEQUENCE [GENOMIC DNA]</scope>
    <source>
        <strain evidence="5">927/4 GUTat10.1</strain>
    </source>
</reference>
<reference evidence="6" key="2">
    <citation type="journal article" date="2005" name="Science">
        <title>Comparative genomics of trypanosomatid parasitic protozoa.</title>
        <authorList>
            <person name="El-Sayed N.M."/>
            <person name="Myler P.J."/>
            <person name="Blandin G."/>
            <person name="Berriman M."/>
            <person name="Crabtree J."/>
            <person name="Aggarwal G."/>
            <person name="Caler E."/>
            <person name="Renauld H."/>
            <person name="Worthey E.A."/>
            <person name="Hertz-Fowler C."/>
            <person name="Ghedin E."/>
            <person name="Peacock C."/>
            <person name="Bartholomeu D.C."/>
            <person name="Haas B.J."/>
            <person name="Tran A.N."/>
            <person name="Wortman J.R."/>
            <person name="Alsmark U.C."/>
            <person name="Angiuoli S."/>
            <person name="Anupama A."/>
            <person name="Badger J."/>
            <person name="Bringaud F."/>
            <person name="Cadag E."/>
            <person name="Carlton J.M."/>
            <person name="Cerqueira G.C."/>
            <person name="Creasy T."/>
            <person name="Delcher A.L."/>
            <person name="Djikeng A."/>
            <person name="Embley T.M."/>
            <person name="Hauser C."/>
            <person name="Ivens A.C."/>
            <person name="Kummerfeld S.K."/>
            <person name="Pereira-Leal J.B."/>
            <person name="Nilsson D."/>
            <person name="Peterson J."/>
            <person name="Salzberg S.L."/>
            <person name="Shallom J."/>
            <person name="Silva J.C."/>
            <person name="Sundaram J."/>
            <person name="Westenberger S."/>
            <person name="White O."/>
            <person name="Melville S.E."/>
            <person name="Donelson J.E."/>
            <person name="Andersson B."/>
            <person name="Stuart K.D."/>
            <person name="Hall N."/>
        </authorList>
    </citation>
    <scope>NUCLEOTIDE SEQUENCE [LARGE SCALE GENOMIC DNA]</scope>
    <source>
        <strain evidence="6">927/4 GUTat10.1</strain>
    </source>
</reference>
<reference evidence="7" key="3">
    <citation type="journal article" date="2005" name="Science">
        <title>The genome of the African trypanosome Trypanosoma brucei.</title>
        <authorList>
            <person name="Berriman M."/>
            <person name="Ghedin E."/>
            <person name="Hertz-Fowler C."/>
            <person name="Blandin G."/>
            <person name="Renauld H."/>
            <person name="Bartholomeu D.C."/>
            <person name="Lennard N.J."/>
            <person name="Caler E."/>
            <person name="Hamlin N.E."/>
            <person name="Haas B."/>
            <person name="Bohme U."/>
            <person name="Hannick L."/>
            <person name="Aslett M.A."/>
            <person name="Shallom J."/>
            <person name="Marcello L."/>
            <person name="Hou L."/>
            <person name="Wickstead B."/>
            <person name="Alsmark U.C.M."/>
            <person name="Arrowsmith C."/>
            <person name="Atkin R.J."/>
            <person name="Barron A.J."/>
            <person name="Bringaud F."/>
            <person name="Brooks K."/>
            <person name="Carrington M."/>
            <person name="Cherevach I."/>
            <person name="Chillingworth T.J."/>
            <person name="Churcher C."/>
            <person name="Clark L.N."/>
            <person name="Corton C.H."/>
            <person name="Cronin A."/>
            <person name="Davies R.M."/>
            <person name="Doggett J."/>
            <person name="Djikeng A."/>
            <person name="Feldblyum T."/>
            <person name="Field M.C."/>
            <person name="Fraser A."/>
            <person name="Goodhead I."/>
            <person name="Hance Z."/>
            <person name="Harper D."/>
            <person name="Harris B.R."/>
            <person name="Hauser H."/>
            <person name="Hostetler J."/>
            <person name="Ivens A."/>
            <person name="Jagels K."/>
            <person name="Johnson D."/>
            <person name="Johnson J."/>
            <person name="Jones K."/>
            <person name="Kerhornou A.X."/>
            <person name="Koo H."/>
            <person name="Larke N."/>
            <person name="Landfear S."/>
            <person name="Larkin C."/>
            <person name="Leech V."/>
            <person name="Line A."/>
            <person name="Lord A."/>
            <person name="Macleod A."/>
            <person name="Mooney P.J."/>
            <person name="Moule S."/>
            <person name="Martin D.M."/>
            <person name="Morgan G.W."/>
            <person name="Mungall K."/>
            <person name="Norbertczak H."/>
            <person name="Ormond D."/>
            <person name="Pai G."/>
            <person name="Peacock C.S."/>
            <person name="Peterson J."/>
            <person name="Quail M.A."/>
            <person name="Rabbinowitsch E."/>
            <person name="Rajandream M.A."/>
            <person name="Reitter C."/>
            <person name="Salzberg S.L."/>
            <person name="Sanders M."/>
            <person name="Schobel S."/>
            <person name="Sharp S."/>
            <person name="Simmonds M."/>
            <person name="Simpson A.J."/>
            <person name="Tallon L."/>
            <person name="Turner C.M."/>
            <person name="Tait A."/>
            <person name="Tivey A.R."/>
            <person name="Van Aken S."/>
            <person name="Walker D."/>
            <person name="Wanless D."/>
            <person name="Wang S."/>
            <person name="White B."/>
            <person name="White O."/>
            <person name="Whitehead S."/>
            <person name="Woodward J."/>
            <person name="Wortman J."/>
            <person name="Adams M.D."/>
            <person name="Embley T.M."/>
            <person name="Gull K."/>
            <person name="Ullu E."/>
            <person name="Barry J.D."/>
            <person name="Fairlamb A.H."/>
            <person name="Opperdoes F."/>
            <person name="Barrell B.G."/>
            <person name="Donelson J.E."/>
            <person name="Hall N."/>
            <person name="Fraser C.M."/>
            <person name="Melville S.E."/>
            <person name="El-Sayed N.M.A."/>
        </authorList>
    </citation>
    <scope>NUCLEOTIDE SEQUENCE [LARGE SCALE GENOMIC DNA]</scope>
    <source>
        <strain evidence="7">927/4 GUTat10.1</strain>
    </source>
</reference>
<reference evidence="4" key="4">
    <citation type="journal article" date="2016" name="J. Biol. Chem.">
        <title>REH2C Helicase and GRBC Subcomplexes May Base Pair through mRNA and Small Guide RNA in Kinetoplastid Editosomes.</title>
        <authorList>
            <person name="Kumar V."/>
            <person name="Madina B.R."/>
            <person name="Gulati S."/>
            <person name="Vashisht A.A."/>
            <person name="Kanyumbu C."/>
            <person name="Pieters B."/>
            <person name="Shakir A."/>
            <person name="Wohlschlegel J.A."/>
            <person name="Read L.K."/>
            <person name="Mooers B.H.M."/>
            <person name="Cruz-Reyes J."/>
        </authorList>
    </citation>
    <scope>FUNCTION</scope>
    <scope>IDENTIFICATION IN THE REH2C COMPLEX</scope>
    <scope>INTERACTION WITH THE GRBC COMPLEX; RECC COMPLEX; REMC COMPLEX</scope>
    <scope>SUBCELLULAR LOCATION</scope>
    <scope>DEVELOPMENTAL STAGE</scope>
    <scope>DISRUPTION PHENOTYPE</scope>
    <source>
        <strain evidence="2">427</strain>
    </source>
</reference>
<feature type="transit peptide" description="Mitochondrion" evidence="1">
    <location>
        <begin position="1"/>
        <end status="unknown"/>
    </location>
</feature>
<feature type="chain" id="PRO_5010844239" description="REH2-associated factor 2" evidence="1">
    <location>
        <begin status="unknown"/>
        <end position="267"/>
    </location>
</feature>